<dbReference type="EMBL" id="AP009484">
    <property type="protein sequence ID" value="BAH16918.1"/>
    <property type="molecule type" value="Genomic_DNA"/>
</dbReference>
<dbReference type="RefSeq" id="WP_012656121.1">
    <property type="nucleotide sequence ID" value="NC_011999.1"/>
</dbReference>
<dbReference type="SMR" id="B9E9K7"/>
<dbReference type="STRING" id="458233.MCCL_0211"/>
<dbReference type="KEGG" id="mcl:MCCL_0211"/>
<dbReference type="eggNOG" id="COG0256">
    <property type="taxonomic scope" value="Bacteria"/>
</dbReference>
<dbReference type="HOGENOM" id="CLU_098841_0_1_9"/>
<dbReference type="OrthoDB" id="9810939at2"/>
<dbReference type="Proteomes" id="UP000001383">
    <property type="component" value="Chromosome"/>
</dbReference>
<dbReference type="GO" id="GO:0022625">
    <property type="term" value="C:cytosolic large ribosomal subunit"/>
    <property type="evidence" value="ECO:0007669"/>
    <property type="project" value="TreeGrafter"/>
</dbReference>
<dbReference type="GO" id="GO:0008097">
    <property type="term" value="F:5S rRNA binding"/>
    <property type="evidence" value="ECO:0007669"/>
    <property type="project" value="TreeGrafter"/>
</dbReference>
<dbReference type="GO" id="GO:0003735">
    <property type="term" value="F:structural constituent of ribosome"/>
    <property type="evidence" value="ECO:0007669"/>
    <property type="project" value="InterPro"/>
</dbReference>
<dbReference type="GO" id="GO:0006412">
    <property type="term" value="P:translation"/>
    <property type="evidence" value="ECO:0007669"/>
    <property type="project" value="UniProtKB-UniRule"/>
</dbReference>
<dbReference type="CDD" id="cd00432">
    <property type="entry name" value="Ribosomal_L18_L5e"/>
    <property type="match status" value="1"/>
</dbReference>
<dbReference type="FunFam" id="3.30.420.100:FF:000001">
    <property type="entry name" value="50S ribosomal protein L18"/>
    <property type="match status" value="1"/>
</dbReference>
<dbReference type="Gene3D" id="3.30.420.100">
    <property type="match status" value="1"/>
</dbReference>
<dbReference type="HAMAP" id="MF_01337_B">
    <property type="entry name" value="Ribosomal_uL18_B"/>
    <property type="match status" value="1"/>
</dbReference>
<dbReference type="InterPro" id="IPR004389">
    <property type="entry name" value="Ribosomal_uL18_bac-type"/>
</dbReference>
<dbReference type="InterPro" id="IPR005484">
    <property type="entry name" value="Ribosomal_uL18_bac/euk"/>
</dbReference>
<dbReference type="NCBIfam" id="TIGR00060">
    <property type="entry name" value="L18_bact"/>
    <property type="match status" value="1"/>
</dbReference>
<dbReference type="PANTHER" id="PTHR12899">
    <property type="entry name" value="39S RIBOSOMAL PROTEIN L18, MITOCHONDRIAL"/>
    <property type="match status" value="1"/>
</dbReference>
<dbReference type="PANTHER" id="PTHR12899:SF3">
    <property type="entry name" value="LARGE RIBOSOMAL SUBUNIT PROTEIN UL18M"/>
    <property type="match status" value="1"/>
</dbReference>
<dbReference type="Pfam" id="PF00861">
    <property type="entry name" value="Ribosomal_L18p"/>
    <property type="match status" value="1"/>
</dbReference>
<dbReference type="SUPFAM" id="SSF53137">
    <property type="entry name" value="Translational machinery components"/>
    <property type="match status" value="1"/>
</dbReference>
<evidence type="ECO:0000255" key="1">
    <source>
        <dbReference type="HAMAP-Rule" id="MF_01337"/>
    </source>
</evidence>
<evidence type="ECO:0000305" key="2"/>
<accession>B9E9K7</accession>
<comment type="function">
    <text evidence="1">This is one of the proteins that bind and probably mediate the attachment of the 5S RNA into the large ribosomal subunit, where it forms part of the central protuberance.</text>
</comment>
<comment type="subunit">
    <text evidence="1">Part of the 50S ribosomal subunit; part of the 5S rRNA/L5/L18/L25 subcomplex. Contacts the 5S and 23S rRNAs.</text>
</comment>
<comment type="similarity">
    <text evidence="1">Belongs to the universal ribosomal protein uL18 family.</text>
</comment>
<organism>
    <name type="scientific">Macrococcus caseolyticus (strain JCSC5402)</name>
    <name type="common">Macrococcoides caseolyticum</name>
    <dbReference type="NCBI Taxonomy" id="458233"/>
    <lineage>
        <taxon>Bacteria</taxon>
        <taxon>Bacillati</taxon>
        <taxon>Bacillota</taxon>
        <taxon>Bacilli</taxon>
        <taxon>Bacillales</taxon>
        <taxon>Staphylococcaceae</taxon>
        <taxon>Macrococcoides</taxon>
    </lineage>
</organism>
<protein>
    <recommendedName>
        <fullName evidence="1">Large ribosomal subunit protein uL18</fullName>
    </recommendedName>
    <alternativeName>
        <fullName evidence="2">50S ribosomal protein L18</fullName>
    </alternativeName>
</protein>
<reference key="1">
    <citation type="journal article" date="2009" name="J. Bacteriol.">
        <title>Complete genome sequence of Macrococcus caseolyticus strain JCSCS5402, reflecting the ancestral genome of the human-pathogenic staphylococci.</title>
        <authorList>
            <person name="Baba T."/>
            <person name="Kuwahara-Arai K."/>
            <person name="Uchiyama I."/>
            <person name="Takeuchi F."/>
            <person name="Ito T."/>
            <person name="Hiramatsu K."/>
        </authorList>
    </citation>
    <scope>NUCLEOTIDE SEQUENCE [LARGE SCALE GENOMIC DNA]</scope>
    <source>
        <strain>JCSC5402</strain>
    </source>
</reference>
<name>RL18_MACCJ</name>
<gene>
    <name evidence="1" type="primary">rplR</name>
    <name type="ordered locus">MCCL_0211</name>
</gene>
<sequence>MITKIDKNKVRMKRHARVRSKLAGTTERPRLNVYRSNKHIYAQVIDDVKGVTLAQASTQDKNLGLETTSNVEAAAKVGEAVAKLAVEKGVKAVVFDRGGYLFHGRVKALADAARENGLEF</sequence>
<feature type="chain" id="PRO_1000166237" description="Large ribosomal subunit protein uL18">
    <location>
        <begin position="1"/>
        <end position="120"/>
    </location>
</feature>
<keyword id="KW-1185">Reference proteome</keyword>
<keyword id="KW-0687">Ribonucleoprotein</keyword>
<keyword id="KW-0689">Ribosomal protein</keyword>
<keyword id="KW-0694">RNA-binding</keyword>
<keyword id="KW-0699">rRNA-binding</keyword>
<proteinExistence type="inferred from homology"/>